<name>FABA_ENT38</name>
<protein>
    <recommendedName>
        <fullName evidence="1">3-hydroxydecanoyl-[acyl-carrier-protein] dehydratase</fullName>
        <ecNumber evidence="1">4.2.1.59</ecNumber>
    </recommendedName>
    <alternativeName>
        <fullName evidence="1">3-hydroxyacyl-[acyl-carrier-protein] dehydratase FabA</fullName>
    </alternativeName>
    <alternativeName>
        <fullName evidence="1">Beta-hydroxydecanoyl thioester dehydrase</fullName>
    </alternativeName>
    <alternativeName>
        <fullName evidence="1">Trans-2-decenoyl-[acyl-carrier-protein] isomerase</fullName>
        <ecNumber evidence="1">5.3.3.14</ecNumber>
    </alternativeName>
</protein>
<gene>
    <name evidence="1" type="primary">fabA</name>
    <name type="ordered locus">Ent638_1466</name>
</gene>
<comment type="function">
    <text evidence="1">Necessary for the introduction of cis unsaturation into fatty acids. Catalyzes the dehydration of (3R)-3-hydroxydecanoyl-ACP to E-(2)-decenoyl-ACP and then its isomerization to Z-(3)-decenoyl-ACP. Can catalyze the dehydratase reaction for beta-hydroxyacyl-ACPs with saturated chain lengths up to 16:0, being most active on intermediate chain length.</text>
</comment>
<comment type="catalytic activity">
    <reaction evidence="1">
        <text>a (3R)-hydroxyacyl-[ACP] = a (2E)-enoyl-[ACP] + H2O</text>
        <dbReference type="Rhea" id="RHEA:13097"/>
        <dbReference type="Rhea" id="RHEA-COMP:9925"/>
        <dbReference type="Rhea" id="RHEA-COMP:9945"/>
        <dbReference type="ChEBI" id="CHEBI:15377"/>
        <dbReference type="ChEBI" id="CHEBI:78784"/>
        <dbReference type="ChEBI" id="CHEBI:78827"/>
        <dbReference type="EC" id="4.2.1.59"/>
    </reaction>
</comment>
<comment type="catalytic activity">
    <reaction evidence="1">
        <text>(3R)-hydroxydecanoyl-[ACP] = (2E)-decenoyl-[ACP] + H2O</text>
        <dbReference type="Rhea" id="RHEA:41860"/>
        <dbReference type="Rhea" id="RHEA-COMP:9638"/>
        <dbReference type="Rhea" id="RHEA-COMP:9639"/>
        <dbReference type="ChEBI" id="CHEBI:15377"/>
        <dbReference type="ChEBI" id="CHEBI:78466"/>
        <dbReference type="ChEBI" id="CHEBI:78467"/>
    </reaction>
</comment>
<comment type="catalytic activity">
    <reaction evidence="1">
        <text>(2E)-decenoyl-[ACP] = (3Z)-decenoyl-[ACP]</text>
        <dbReference type="Rhea" id="RHEA:23568"/>
        <dbReference type="Rhea" id="RHEA-COMP:9639"/>
        <dbReference type="Rhea" id="RHEA-COMP:9927"/>
        <dbReference type="ChEBI" id="CHEBI:78467"/>
        <dbReference type="ChEBI" id="CHEBI:78798"/>
        <dbReference type="EC" id="5.3.3.14"/>
    </reaction>
</comment>
<comment type="pathway">
    <text evidence="1">Lipid metabolism; fatty acid biosynthesis.</text>
</comment>
<comment type="subunit">
    <text evidence="1">Homodimer.</text>
</comment>
<comment type="subcellular location">
    <subcellularLocation>
        <location evidence="1">Cytoplasm</location>
    </subcellularLocation>
</comment>
<comment type="similarity">
    <text evidence="1">Belongs to the thioester dehydratase family. FabA subfamily.</text>
</comment>
<proteinExistence type="inferred from homology"/>
<feature type="chain" id="PRO_1000060823" description="3-hydroxydecanoyl-[acyl-carrier-protein] dehydratase">
    <location>
        <begin position="1"/>
        <end position="172"/>
    </location>
</feature>
<feature type="active site" evidence="1">
    <location>
        <position position="71"/>
    </location>
</feature>
<sequence>MVDKRESYTKEDLLASGRGELFGAKGPQLPAPSMLMMDRVVKMTETGGNFDKGYVEAELDINPELWFFGCHFIGDPVMPGCLGLDAMWQLVGFYLGWLGGEGKGRALGVGEVKFTGQVLPSAKKVTYRIHFKRIVNRRLVMGLADGEVLVDGRVIYTANDLKVGLFQDTSAF</sequence>
<dbReference type="EC" id="4.2.1.59" evidence="1"/>
<dbReference type="EC" id="5.3.3.14" evidence="1"/>
<dbReference type="EMBL" id="CP000653">
    <property type="protein sequence ID" value="ABP60146.1"/>
    <property type="molecule type" value="Genomic_DNA"/>
</dbReference>
<dbReference type="RefSeq" id="WP_012016863.1">
    <property type="nucleotide sequence ID" value="NC_009436.1"/>
</dbReference>
<dbReference type="SMR" id="A4W8W6"/>
<dbReference type="STRING" id="399742.Ent638_1466"/>
<dbReference type="KEGG" id="ent:Ent638_1466"/>
<dbReference type="eggNOG" id="COG0764">
    <property type="taxonomic scope" value="Bacteria"/>
</dbReference>
<dbReference type="HOGENOM" id="CLU_097925_0_0_6"/>
<dbReference type="OrthoDB" id="9786735at2"/>
<dbReference type="UniPathway" id="UPA00094"/>
<dbReference type="Proteomes" id="UP000000230">
    <property type="component" value="Chromosome"/>
</dbReference>
<dbReference type="GO" id="GO:0005737">
    <property type="term" value="C:cytoplasm"/>
    <property type="evidence" value="ECO:0007669"/>
    <property type="project" value="UniProtKB-SubCell"/>
</dbReference>
<dbReference type="GO" id="GO:0019171">
    <property type="term" value="F:(3R)-hydroxyacyl-[acyl-carrier-protein] dehydratase activity"/>
    <property type="evidence" value="ECO:0007669"/>
    <property type="project" value="UniProtKB-UniRule"/>
</dbReference>
<dbReference type="GO" id="GO:0034017">
    <property type="term" value="F:trans-2-decenoyl-acyl-carrier-protein isomerase activity"/>
    <property type="evidence" value="ECO:0007669"/>
    <property type="project" value="UniProtKB-UniRule"/>
</dbReference>
<dbReference type="GO" id="GO:0006636">
    <property type="term" value="P:unsaturated fatty acid biosynthetic process"/>
    <property type="evidence" value="ECO:0007669"/>
    <property type="project" value="UniProtKB-UniRule"/>
</dbReference>
<dbReference type="CDD" id="cd01287">
    <property type="entry name" value="FabA"/>
    <property type="match status" value="1"/>
</dbReference>
<dbReference type="FunFam" id="3.10.129.10:FF:000003">
    <property type="entry name" value="3-hydroxydecanoyl-[acyl-carrier-protein] dehydratase"/>
    <property type="match status" value="1"/>
</dbReference>
<dbReference type="Gene3D" id="3.10.129.10">
    <property type="entry name" value="Hotdog Thioesterase"/>
    <property type="match status" value="1"/>
</dbReference>
<dbReference type="HAMAP" id="MF_00405">
    <property type="entry name" value="FabA"/>
    <property type="match status" value="1"/>
</dbReference>
<dbReference type="InterPro" id="IPR010083">
    <property type="entry name" value="FabA"/>
</dbReference>
<dbReference type="InterPro" id="IPR013114">
    <property type="entry name" value="FabA_FabZ"/>
</dbReference>
<dbReference type="InterPro" id="IPR029069">
    <property type="entry name" value="HotDog_dom_sf"/>
</dbReference>
<dbReference type="NCBIfam" id="TIGR01749">
    <property type="entry name" value="fabA"/>
    <property type="match status" value="1"/>
</dbReference>
<dbReference type="NCBIfam" id="NF003509">
    <property type="entry name" value="PRK05174.1"/>
    <property type="match status" value="1"/>
</dbReference>
<dbReference type="PANTHER" id="PTHR30272">
    <property type="entry name" value="3-HYDROXYACYL-[ACYL-CARRIER-PROTEIN] DEHYDRATASE"/>
    <property type="match status" value="1"/>
</dbReference>
<dbReference type="PANTHER" id="PTHR30272:SF8">
    <property type="entry name" value="3-HYDROXYDECANOYL-[ACYL-CARRIER-PROTEIN] DEHYDRATASE"/>
    <property type="match status" value="1"/>
</dbReference>
<dbReference type="Pfam" id="PF07977">
    <property type="entry name" value="FabA"/>
    <property type="match status" value="1"/>
</dbReference>
<dbReference type="SUPFAM" id="SSF54637">
    <property type="entry name" value="Thioesterase/thiol ester dehydrase-isomerase"/>
    <property type="match status" value="1"/>
</dbReference>
<reference key="1">
    <citation type="journal article" date="2010" name="PLoS Genet.">
        <title>Genome sequence of the plant growth promoting endophytic bacterium Enterobacter sp. 638.</title>
        <authorList>
            <person name="Taghavi S."/>
            <person name="van der Lelie D."/>
            <person name="Hoffman A."/>
            <person name="Zhang Y.B."/>
            <person name="Walla M.D."/>
            <person name="Vangronsveld J."/>
            <person name="Newman L."/>
            <person name="Monchy S."/>
        </authorList>
    </citation>
    <scope>NUCLEOTIDE SEQUENCE [LARGE SCALE GENOMIC DNA]</scope>
    <source>
        <strain>638</strain>
    </source>
</reference>
<evidence type="ECO:0000255" key="1">
    <source>
        <dbReference type="HAMAP-Rule" id="MF_00405"/>
    </source>
</evidence>
<keyword id="KW-0963">Cytoplasm</keyword>
<keyword id="KW-0275">Fatty acid biosynthesis</keyword>
<keyword id="KW-0276">Fatty acid metabolism</keyword>
<keyword id="KW-0413">Isomerase</keyword>
<keyword id="KW-0444">Lipid biosynthesis</keyword>
<keyword id="KW-0443">Lipid metabolism</keyword>
<keyword id="KW-0456">Lyase</keyword>
<organism>
    <name type="scientific">Enterobacter sp. (strain 638)</name>
    <dbReference type="NCBI Taxonomy" id="399742"/>
    <lineage>
        <taxon>Bacteria</taxon>
        <taxon>Pseudomonadati</taxon>
        <taxon>Pseudomonadota</taxon>
        <taxon>Gammaproteobacteria</taxon>
        <taxon>Enterobacterales</taxon>
        <taxon>Enterobacteriaceae</taxon>
        <taxon>Enterobacter</taxon>
    </lineage>
</organism>
<accession>A4W8W6</accession>